<reference key="1">
    <citation type="journal article" date="1999" name="Nature">
        <title>Sequence and analysis of chromosome 2 of the plant Arabidopsis thaliana.</title>
        <authorList>
            <person name="Lin X."/>
            <person name="Kaul S."/>
            <person name="Rounsley S.D."/>
            <person name="Shea T.P."/>
            <person name="Benito M.-I."/>
            <person name="Town C.D."/>
            <person name="Fujii C.Y."/>
            <person name="Mason T.M."/>
            <person name="Bowman C.L."/>
            <person name="Barnstead M.E."/>
            <person name="Feldblyum T.V."/>
            <person name="Buell C.R."/>
            <person name="Ketchum K.A."/>
            <person name="Lee J.J."/>
            <person name="Ronning C.M."/>
            <person name="Koo H.L."/>
            <person name="Moffat K.S."/>
            <person name="Cronin L.A."/>
            <person name="Shen M."/>
            <person name="Pai G."/>
            <person name="Van Aken S."/>
            <person name="Umayam L."/>
            <person name="Tallon L.J."/>
            <person name="Gill J.E."/>
            <person name="Adams M.D."/>
            <person name="Carrera A.J."/>
            <person name="Creasy T.H."/>
            <person name="Goodman H.M."/>
            <person name="Somerville C.R."/>
            <person name="Copenhaver G.P."/>
            <person name="Preuss D."/>
            <person name="Nierman W.C."/>
            <person name="White O."/>
            <person name="Eisen J.A."/>
            <person name="Salzberg S.L."/>
            <person name="Fraser C.M."/>
            <person name="Venter J.C."/>
        </authorList>
    </citation>
    <scope>NUCLEOTIDE SEQUENCE [LARGE SCALE GENOMIC DNA]</scope>
    <source>
        <strain>cv. Columbia</strain>
    </source>
</reference>
<reference key="2">
    <citation type="journal article" date="2017" name="Plant J.">
        <title>Araport11: a complete reannotation of the Arabidopsis thaliana reference genome.</title>
        <authorList>
            <person name="Cheng C.Y."/>
            <person name="Krishnakumar V."/>
            <person name="Chan A.P."/>
            <person name="Thibaud-Nissen F."/>
            <person name="Schobel S."/>
            <person name="Town C.D."/>
        </authorList>
    </citation>
    <scope>GENOME REANNOTATION</scope>
    <source>
        <strain>cv. Columbia</strain>
    </source>
</reference>
<reference key="3">
    <citation type="journal article" date="2004" name="Genome Res.">
        <title>Whole genome sequence comparisons and 'full-length' cDNA sequences: a combined approach to evaluate and improve Arabidopsis genome annotation.</title>
        <authorList>
            <person name="Castelli V."/>
            <person name="Aury J.-M."/>
            <person name="Jaillon O."/>
            <person name="Wincker P."/>
            <person name="Clepet C."/>
            <person name="Menard M."/>
            <person name="Cruaud C."/>
            <person name="Quetier F."/>
            <person name="Scarpelli C."/>
            <person name="Schaechter V."/>
            <person name="Temple G."/>
            <person name="Caboche M."/>
            <person name="Weissenbach J."/>
            <person name="Salanoubat M."/>
        </authorList>
    </citation>
    <scope>NUCLEOTIDE SEQUENCE [LARGE SCALE MRNA]</scope>
    <source>
        <strain>cv. Columbia</strain>
    </source>
</reference>
<reference key="4">
    <citation type="journal article" date="2008" name="Plant Physiol. Biochem.">
        <title>Expression of glycine-rich protein genes, AtGRP5 and AtGRP23, induced by the cutin monomer 16-hydroxypalmitic acid in Arabidopsis thaliana.</title>
        <authorList>
            <person name="Park J.H."/>
            <person name="Suh M.C."/>
            <person name="Kim T.H."/>
            <person name="Kim M.C."/>
            <person name="Cho S.H."/>
        </authorList>
    </citation>
    <scope>INDUCTION BY ABSCISIC ACID; SALICYLIC ACID AND 16-HYDROXYPALMITIC ACID</scope>
    <source>
        <strain>cv. Columbia</strain>
    </source>
</reference>
<protein>
    <recommendedName>
        <fullName evidence="3">Glycine-rich protein 23</fullName>
        <shortName evidence="3">AtGRP23</shortName>
    </recommendedName>
</protein>
<organism>
    <name type="scientific">Arabidopsis thaliana</name>
    <name type="common">Mouse-ear cress</name>
    <dbReference type="NCBI Taxonomy" id="3702"/>
    <lineage>
        <taxon>Eukaryota</taxon>
        <taxon>Viridiplantae</taxon>
        <taxon>Streptophyta</taxon>
        <taxon>Embryophyta</taxon>
        <taxon>Tracheophyta</taxon>
        <taxon>Spermatophyta</taxon>
        <taxon>Magnoliopsida</taxon>
        <taxon>eudicotyledons</taxon>
        <taxon>Gunneridae</taxon>
        <taxon>Pentapetalae</taxon>
        <taxon>rosids</taxon>
        <taxon>malvids</taxon>
        <taxon>Brassicales</taxon>
        <taxon>Brassicaceae</taxon>
        <taxon>Camelineae</taxon>
        <taxon>Arabidopsis</taxon>
    </lineage>
</organism>
<accession>O48848</accession>
<comment type="alternative products">
    <event type="alternative splicing"/>
    <isoform>
        <id>O48848-1</id>
        <name>1</name>
        <sequence type="displayed"/>
    </isoform>
    <text evidence="4">A number of isoforms are produced. According to EST sequences.</text>
</comment>
<comment type="induction">
    <text evidence="2">Slightly induced by 16-hydroxypalmitic acid (HPA), a major component of cutin that triggers H(2)O(2) production. Accumulates in response to abscisic acid (ABA) and salicylic acid (SA) treatments.</text>
</comment>
<gene>
    <name evidence="3" type="primary">GRP23</name>
    <name evidence="5" type="ordered locus">At2g32690</name>
    <name evidence="6" type="ORF">F24L7.17</name>
</gene>
<evidence type="ECO:0000255" key="1"/>
<evidence type="ECO:0000269" key="2">
    <source>
    </source>
</evidence>
<evidence type="ECO:0000303" key="3">
    <source>
    </source>
</evidence>
<evidence type="ECO:0000305" key="4"/>
<evidence type="ECO:0000312" key="5">
    <source>
        <dbReference type="Araport" id="AT2G32690"/>
    </source>
</evidence>
<evidence type="ECO:0000312" key="6">
    <source>
        <dbReference type="EMBL" id="AAC04494.1"/>
    </source>
</evidence>
<proteinExistence type="evidence at transcript level"/>
<dbReference type="EMBL" id="AC003974">
    <property type="protein sequence ID" value="AAC04494.1"/>
    <property type="molecule type" value="Genomic_DNA"/>
</dbReference>
<dbReference type="EMBL" id="CP002685">
    <property type="protein sequence ID" value="AEC08716.1"/>
    <property type="molecule type" value="Genomic_DNA"/>
</dbReference>
<dbReference type="EMBL" id="BX821613">
    <property type="status" value="NOT_ANNOTATED_CDS"/>
    <property type="molecule type" value="mRNA"/>
</dbReference>
<dbReference type="PIR" id="T00799">
    <property type="entry name" value="T00799"/>
</dbReference>
<dbReference type="RefSeq" id="NP_180828.1">
    <molecule id="O48848-1"/>
    <property type="nucleotide sequence ID" value="NM_128828.4"/>
</dbReference>
<dbReference type="FunCoup" id="O48848">
    <property type="interactions" value="5"/>
</dbReference>
<dbReference type="STRING" id="3702.O48848"/>
<dbReference type="PaxDb" id="3702-AT2G32690.1"/>
<dbReference type="ProteomicsDB" id="220598">
    <molecule id="O48848-1"/>
</dbReference>
<dbReference type="EnsemblPlants" id="AT2G32690.1">
    <molecule id="O48848-1"/>
    <property type="protein sequence ID" value="AT2G32690.1"/>
    <property type="gene ID" value="AT2G32690"/>
</dbReference>
<dbReference type="GeneID" id="3768391"/>
<dbReference type="Gramene" id="AT2G32690.1">
    <molecule id="O48848-1"/>
    <property type="protein sequence ID" value="AT2G32690.1"/>
    <property type="gene ID" value="AT2G32690"/>
</dbReference>
<dbReference type="KEGG" id="ath:AT2G32690"/>
<dbReference type="Araport" id="AT2G32690"/>
<dbReference type="TAIR" id="AT2G32690">
    <property type="gene designation" value="GRP23"/>
</dbReference>
<dbReference type="eggNOG" id="ENOG502S1KZ">
    <property type="taxonomic scope" value="Eukaryota"/>
</dbReference>
<dbReference type="HOGENOM" id="CLU_120178_0_0_1"/>
<dbReference type="InParanoid" id="O48848"/>
<dbReference type="OMA" id="KPRPYFH"/>
<dbReference type="OrthoDB" id="1113929at2759"/>
<dbReference type="PRO" id="PR:O48848"/>
<dbReference type="Proteomes" id="UP000006548">
    <property type="component" value="Chromosome 2"/>
</dbReference>
<dbReference type="ExpressionAtlas" id="O48848">
    <property type="expression patterns" value="baseline and differential"/>
</dbReference>
<dbReference type="GO" id="GO:0009737">
    <property type="term" value="P:response to abscisic acid"/>
    <property type="evidence" value="ECO:0000270"/>
    <property type="project" value="TAIR"/>
</dbReference>
<dbReference type="GO" id="GO:0009751">
    <property type="term" value="P:response to salicylic acid"/>
    <property type="evidence" value="ECO:0000270"/>
    <property type="project" value="TAIR"/>
</dbReference>
<keyword id="KW-0025">Alternative splicing</keyword>
<keyword id="KW-1185">Reference proteome</keyword>
<keyword id="KW-0677">Repeat</keyword>
<keyword id="KW-0732">Signal</keyword>
<sequence>MGLISGKVCVFIFVFALVAEFSFGNVEVNDDKHFFHKPRPFLHKPRPFLHKHGIYKKGFGKGLGGGGGLGGGGGLGGGGGLGGGGGLGGGGGLGGGGGLGGGSGLGGGGGLGGGSGLGGGGGLGGGGGGGLGGGGGLGGGAGGGYGGGAGGGLGGGGGIGGGGGFGGGGGGGFGGGAGGGFGKGIGGGGGLGGGYVGGGHH</sequence>
<name>GRP23_ARATH</name>
<feature type="signal peptide" evidence="1">
    <location>
        <begin position="1"/>
        <end position="24"/>
    </location>
</feature>
<feature type="chain" id="PRO_5006739156" description="Glycine-rich protein 23">
    <location>
        <begin position="25"/>
        <end position="201"/>
    </location>
</feature>
<feature type="repeat" description="1" evidence="4">
    <location>
        <begin position="62"/>
        <end position="67"/>
    </location>
</feature>
<feature type="repeat" description="2" evidence="4">
    <location>
        <begin position="68"/>
        <end position="73"/>
    </location>
</feature>
<feature type="repeat" description="3" evidence="4">
    <location>
        <begin position="74"/>
        <end position="79"/>
    </location>
</feature>
<feature type="repeat" description="4" evidence="4">
    <location>
        <begin position="80"/>
        <end position="85"/>
    </location>
</feature>
<feature type="repeat" description="5" evidence="4">
    <location>
        <begin position="86"/>
        <end position="91"/>
    </location>
</feature>
<feature type="repeat" description="6" evidence="4">
    <location>
        <begin position="92"/>
        <end position="97"/>
    </location>
</feature>
<feature type="repeat" description="7" evidence="4">
    <location>
        <begin position="98"/>
        <end position="103"/>
    </location>
</feature>
<feature type="repeat" description="8" evidence="4">
    <location>
        <begin position="104"/>
        <end position="109"/>
    </location>
</feature>
<feature type="repeat" description="9" evidence="4">
    <location>
        <begin position="110"/>
        <end position="115"/>
    </location>
</feature>
<feature type="repeat" description="10" evidence="4">
    <location>
        <begin position="116"/>
        <end position="121"/>
    </location>
</feature>
<feature type="repeat" description="11" evidence="4">
    <location>
        <begin position="122"/>
        <end position="129"/>
    </location>
</feature>
<feature type="repeat" description="12" evidence="4">
    <location>
        <begin position="130"/>
        <end position="135"/>
    </location>
</feature>
<feature type="repeat" description="13" evidence="4">
    <location>
        <begin position="136"/>
        <end position="143"/>
    </location>
</feature>
<feature type="repeat" description="14" evidence="4">
    <location>
        <begin position="144"/>
        <end position="151"/>
    </location>
</feature>
<feature type="repeat" description="15" evidence="4">
    <location>
        <begin position="152"/>
        <end position="157"/>
    </location>
</feature>
<feature type="repeat" description="16" evidence="4">
    <location>
        <begin position="158"/>
        <end position="163"/>
    </location>
</feature>
<feature type="repeat" description="17" evidence="4">
    <location>
        <begin position="164"/>
        <end position="169"/>
    </location>
</feature>
<feature type="repeat" description="18" evidence="4">
    <location>
        <begin position="170"/>
        <end position="175"/>
    </location>
</feature>
<feature type="repeat" description="19" evidence="4">
    <location>
        <begin position="176"/>
        <end position="182"/>
    </location>
</feature>
<feature type="repeat" description="20" evidence="4">
    <location>
        <begin position="184"/>
        <end position="189"/>
    </location>
</feature>
<feature type="repeat" description="21" evidence="4">
    <location>
        <begin position="190"/>
        <end position="194"/>
    </location>
</feature>
<feature type="region of interest" description="21 X 6 AA approximate tandem repeats of G-L-G-G-G-G, Gly-rich" evidence="4">
    <location>
        <begin position="62"/>
        <end position="194"/>
    </location>
</feature>
<feature type="sequence conflict" description="In Ref. 3; BX821613." evidence="4" ref="3">
    <original>F</original>
    <variation>S</variation>
    <location>
        <position position="11"/>
    </location>
</feature>
<feature type="sequence conflict" description="In Ref. 3; BX821613." evidence="4" ref="3">
    <original>H</original>
    <variation>Y</variation>
    <location>
        <position position="33"/>
    </location>
</feature>